<organism>
    <name type="scientific">Shewanella sp. (strain ANA-3)</name>
    <dbReference type="NCBI Taxonomy" id="94122"/>
    <lineage>
        <taxon>Bacteria</taxon>
        <taxon>Pseudomonadati</taxon>
        <taxon>Pseudomonadota</taxon>
        <taxon>Gammaproteobacteria</taxon>
        <taxon>Alteromonadales</taxon>
        <taxon>Shewanellaceae</taxon>
        <taxon>Shewanella</taxon>
    </lineage>
</organism>
<keyword id="KW-0997">Cell inner membrane</keyword>
<keyword id="KW-1003">Cell membrane</keyword>
<keyword id="KW-0350">Heme biosynthesis</keyword>
<keyword id="KW-0472">Membrane</keyword>
<keyword id="KW-0808">Transferase</keyword>
<keyword id="KW-0812">Transmembrane</keyword>
<keyword id="KW-1133">Transmembrane helix</keyword>
<comment type="function">
    <text evidence="1">Converts heme B (protoheme IX) to heme O by substitution of the vinyl group on carbon 2 of heme B porphyrin ring with a hydroxyethyl farnesyl side group.</text>
</comment>
<comment type="catalytic activity">
    <reaction evidence="1">
        <text>heme b + (2E,6E)-farnesyl diphosphate + H2O = Fe(II)-heme o + diphosphate</text>
        <dbReference type="Rhea" id="RHEA:28070"/>
        <dbReference type="ChEBI" id="CHEBI:15377"/>
        <dbReference type="ChEBI" id="CHEBI:33019"/>
        <dbReference type="ChEBI" id="CHEBI:60344"/>
        <dbReference type="ChEBI" id="CHEBI:60530"/>
        <dbReference type="ChEBI" id="CHEBI:175763"/>
        <dbReference type="EC" id="2.5.1.141"/>
    </reaction>
</comment>
<comment type="pathway">
    <text evidence="1">Porphyrin-containing compound metabolism; heme O biosynthesis; heme O from protoheme: step 1/1.</text>
</comment>
<comment type="subcellular location">
    <subcellularLocation>
        <location evidence="1">Cell inner membrane</location>
        <topology evidence="1">Multi-pass membrane protein</topology>
    </subcellularLocation>
</comment>
<comment type="miscellaneous">
    <text evidence="1">Carbon 2 of the heme B porphyrin ring is defined according to the Fischer nomenclature.</text>
</comment>
<comment type="similarity">
    <text evidence="1">Belongs to the UbiA prenyltransferase family. Protoheme IX farnesyltransferase subfamily.</text>
</comment>
<reference key="1">
    <citation type="submission" date="2006-09" db="EMBL/GenBank/DDBJ databases">
        <title>Complete sequence of chromosome 1 of Shewanella sp. ANA-3.</title>
        <authorList>
            <person name="Copeland A."/>
            <person name="Lucas S."/>
            <person name="Lapidus A."/>
            <person name="Barry K."/>
            <person name="Detter J.C."/>
            <person name="Glavina del Rio T."/>
            <person name="Hammon N."/>
            <person name="Israni S."/>
            <person name="Dalin E."/>
            <person name="Tice H."/>
            <person name="Pitluck S."/>
            <person name="Chertkov O."/>
            <person name="Brettin T."/>
            <person name="Bruce D."/>
            <person name="Han C."/>
            <person name="Tapia R."/>
            <person name="Gilna P."/>
            <person name="Schmutz J."/>
            <person name="Larimer F."/>
            <person name="Land M."/>
            <person name="Hauser L."/>
            <person name="Kyrpides N."/>
            <person name="Kim E."/>
            <person name="Newman D."/>
            <person name="Salticov C."/>
            <person name="Konstantinidis K."/>
            <person name="Klappenback J."/>
            <person name="Tiedje J."/>
            <person name="Richardson P."/>
        </authorList>
    </citation>
    <scope>NUCLEOTIDE SEQUENCE [LARGE SCALE GENOMIC DNA]</scope>
    <source>
        <strain>ANA-3</strain>
    </source>
</reference>
<feature type="chain" id="PRO_0000326952" description="Protoheme IX farnesyltransferase 1">
    <location>
        <begin position="1"/>
        <end position="300"/>
    </location>
</feature>
<feature type="transmembrane region" description="Helical" evidence="1">
    <location>
        <begin position="28"/>
        <end position="48"/>
    </location>
</feature>
<feature type="transmembrane region" description="Helical" evidence="1">
    <location>
        <begin position="54"/>
        <end position="74"/>
    </location>
</feature>
<feature type="transmembrane region" description="Helical" evidence="1">
    <location>
        <begin position="100"/>
        <end position="120"/>
    </location>
</feature>
<feature type="transmembrane region" description="Helical" evidence="1">
    <location>
        <begin position="122"/>
        <end position="142"/>
    </location>
</feature>
<feature type="transmembrane region" description="Helical" evidence="1">
    <location>
        <begin position="149"/>
        <end position="169"/>
    </location>
</feature>
<feature type="transmembrane region" description="Helical" evidence="1">
    <location>
        <begin position="176"/>
        <end position="196"/>
    </location>
</feature>
<feature type="transmembrane region" description="Helical" evidence="1">
    <location>
        <begin position="222"/>
        <end position="242"/>
    </location>
</feature>
<feature type="transmembrane region" description="Helical" evidence="1">
    <location>
        <begin position="243"/>
        <end position="263"/>
    </location>
</feature>
<feature type="transmembrane region" description="Helical" evidence="1">
    <location>
        <begin position="280"/>
        <end position="300"/>
    </location>
</feature>
<protein>
    <recommendedName>
        <fullName evidence="1">Protoheme IX farnesyltransferase 1</fullName>
        <ecNumber evidence="1">2.5.1.141</ecNumber>
    </recommendedName>
    <alternativeName>
        <fullName evidence="1">Heme B farnesyltransferase 1</fullName>
    </alternativeName>
    <alternativeName>
        <fullName evidence="1">Heme O synthase 1</fullName>
    </alternativeName>
</protein>
<proteinExistence type="inferred from homology"/>
<sequence>MAKPLSISSHPSVHLAWRAYFEMTKPKVVALMLLTVLVGMCLAMPTILPVKPLVAGLLGIAMMAGSAAALNHLIDRRIDGMMARTYNRPLPKGRVSATRALLFAALLGCLGFVILYVFTNPLTAWLTFASLIGYALIYTAYLKRATPQNIVIGGLAGAMPPLLGWTAVTNQFHGHALLLVIIIFLWTPPHFWALAIHRRAEYAKVDIPMLPVTHGVEFTKTCILLYTILLAMACLLPVLVGMSGPLYFVCSSLLSTGFIYKAWQLKYQDSEGLAMQVFRFSIYHLMLLFMALLLDHYLWA</sequence>
<evidence type="ECO:0000255" key="1">
    <source>
        <dbReference type="HAMAP-Rule" id="MF_00154"/>
    </source>
</evidence>
<name>CYOE1_SHESA</name>
<dbReference type="EC" id="2.5.1.141" evidence="1"/>
<dbReference type="EMBL" id="CP000469">
    <property type="protein sequence ID" value="ABK50216.1"/>
    <property type="molecule type" value="Genomic_DNA"/>
</dbReference>
<dbReference type="RefSeq" id="WP_011718716.1">
    <property type="nucleotide sequence ID" value="NC_008577.1"/>
</dbReference>
<dbReference type="SMR" id="A0L2E7"/>
<dbReference type="STRING" id="94122.Shewana3_3998"/>
<dbReference type="KEGG" id="shn:Shewana3_3998"/>
<dbReference type="eggNOG" id="COG0109">
    <property type="taxonomic scope" value="Bacteria"/>
</dbReference>
<dbReference type="HOGENOM" id="CLU_029631_0_2_6"/>
<dbReference type="OrthoDB" id="9814417at2"/>
<dbReference type="UniPathway" id="UPA00834">
    <property type="reaction ID" value="UER00712"/>
</dbReference>
<dbReference type="Proteomes" id="UP000002589">
    <property type="component" value="Chromosome"/>
</dbReference>
<dbReference type="GO" id="GO:0005886">
    <property type="term" value="C:plasma membrane"/>
    <property type="evidence" value="ECO:0007669"/>
    <property type="project" value="UniProtKB-SubCell"/>
</dbReference>
<dbReference type="GO" id="GO:0008495">
    <property type="term" value="F:protoheme IX farnesyltransferase activity"/>
    <property type="evidence" value="ECO:0007669"/>
    <property type="project" value="UniProtKB-UniRule"/>
</dbReference>
<dbReference type="GO" id="GO:0048034">
    <property type="term" value="P:heme O biosynthetic process"/>
    <property type="evidence" value="ECO:0007669"/>
    <property type="project" value="UniProtKB-UniRule"/>
</dbReference>
<dbReference type="CDD" id="cd13957">
    <property type="entry name" value="PT_UbiA_Cox10"/>
    <property type="match status" value="1"/>
</dbReference>
<dbReference type="FunFam" id="1.10.357.140:FF:000001">
    <property type="entry name" value="Protoheme IX farnesyltransferase"/>
    <property type="match status" value="1"/>
</dbReference>
<dbReference type="Gene3D" id="1.10.357.140">
    <property type="entry name" value="UbiA prenyltransferase"/>
    <property type="match status" value="1"/>
</dbReference>
<dbReference type="HAMAP" id="MF_00154">
    <property type="entry name" value="CyoE_CtaB"/>
    <property type="match status" value="1"/>
</dbReference>
<dbReference type="InterPro" id="IPR006369">
    <property type="entry name" value="Protohaem_IX_farnesylTrfase"/>
</dbReference>
<dbReference type="InterPro" id="IPR000537">
    <property type="entry name" value="UbiA_prenyltransferase"/>
</dbReference>
<dbReference type="InterPro" id="IPR030470">
    <property type="entry name" value="UbiA_prenylTrfase_CS"/>
</dbReference>
<dbReference type="InterPro" id="IPR044878">
    <property type="entry name" value="UbiA_sf"/>
</dbReference>
<dbReference type="NCBIfam" id="TIGR01473">
    <property type="entry name" value="cyoE_ctaB"/>
    <property type="match status" value="1"/>
</dbReference>
<dbReference type="NCBIfam" id="NF003349">
    <property type="entry name" value="PRK04375.1-2"/>
    <property type="match status" value="1"/>
</dbReference>
<dbReference type="PANTHER" id="PTHR43448:SF7">
    <property type="entry name" value="4-HYDROXYBENZOATE SOLANESYLTRANSFERASE"/>
    <property type="match status" value="1"/>
</dbReference>
<dbReference type="PANTHER" id="PTHR43448">
    <property type="entry name" value="PROTOHEME IX FARNESYLTRANSFERASE, MITOCHONDRIAL"/>
    <property type="match status" value="1"/>
</dbReference>
<dbReference type="Pfam" id="PF01040">
    <property type="entry name" value="UbiA"/>
    <property type="match status" value="1"/>
</dbReference>
<dbReference type="PROSITE" id="PS00943">
    <property type="entry name" value="UBIA"/>
    <property type="match status" value="1"/>
</dbReference>
<gene>
    <name evidence="1" type="primary">cyoE1</name>
    <name type="ordered locus">Shewana3_3998</name>
</gene>
<accession>A0L2E7</accession>